<comment type="function">
    <text evidence="1">Catalyzes the hydrolysis of UDP-3-O-myristoyl-N-acetylglucosamine to form UDP-3-O-myristoylglucosamine and acetate, the committed step in lipid A biosynthesis.</text>
</comment>
<comment type="catalytic activity">
    <reaction evidence="1">
        <text>a UDP-3-O-[(3R)-3-hydroxyacyl]-N-acetyl-alpha-D-glucosamine + H2O = a UDP-3-O-[(3R)-3-hydroxyacyl]-alpha-D-glucosamine + acetate</text>
        <dbReference type="Rhea" id="RHEA:67816"/>
        <dbReference type="ChEBI" id="CHEBI:15377"/>
        <dbReference type="ChEBI" id="CHEBI:30089"/>
        <dbReference type="ChEBI" id="CHEBI:137740"/>
        <dbReference type="ChEBI" id="CHEBI:173225"/>
        <dbReference type="EC" id="3.5.1.108"/>
    </reaction>
</comment>
<comment type="cofactor">
    <cofactor evidence="1">
        <name>Zn(2+)</name>
        <dbReference type="ChEBI" id="CHEBI:29105"/>
    </cofactor>
</comment>
<comment type="pathway">
    <text evidence="1">Glycolipid biosynthesis; lipid IV(A) biosynthesis; lipid IV(A) from (3R)-3-hydroxytetradecanoyl-[acyl-carrier-protein] and UDP-N-acetyl-alpha-D-glucosamine: step 2/6.</text>
</comment>
<comment type="similarity">
    <text evidence="1">Belongs to the LpxC family.</text>
</comment>
<sequence>MIRQRTLKNVIRATGVGLHTGEKVYMTVRPAPVDTGIVFRRVDLDPVVEIKAAADAVGETTLSSTLVQDGVKVGTVEHFLSAMAGLGIDNAFVELSAPEMPIMDGSAGPFVFLLQSAGIKEQEAAKKFIRIKKEVTVREDDKTATFVPFDGFKVTFSIEFDHPVFEERNQLASIDFSTTSFVKEVARARTFGFMRDIEFLRSQNLALGGSVDNAIVVDEYRILNEDGLRYDDEFVKHKMLDAIGDLYLLGHSLIGEFIGHKSGHALNNALLREILRQEDSYEVVTFEDATDAPVSYMRPVLAAE</sequence>
<accession>Q0VRZ6</accession>
<protein>
    <recommendedName>
        <fullName evidence="1">UDP-3-O-acyl-N-acetylglucosamine deacetylase</fullName>
        <shortName evidence="1">UDP-3-O-acyl-GlcNAc deacetylase</shortName>
        <ecNumber evidence="1">3.5.1.108</ecNumber>
    </recommendedName>
    <alternativeName>
        <fullName evidence="1">UDP-3-O-[R-3-hydroxymyristoyl]-N-acetylglucosamine deacetylase</fullName>
    </alternativeName>
</protein>
<gene>
    <name evidence="1" type="primary">lpxC</name>
    <name type="ordered locus">ABO_0604</name>
</gene>
<feature type="chain" id="PRO_0000253640" description="UDP-3-O-acyl-N-acetylglucosamine deacetylase">
    <location>
        <begin position="1"/>
        <end position="304"/>
    </location>
</feature>
<feature type="active site" description="Proton donor" evidence="1">
    <location>
        <position position="264"/>
    </location>
</feature>
<feature type="binding site" evidence="1">
    <location>
        <position position="78"/>
    </location>
    <ligand>
        <name>Zn(2+)</name>
        <dbReference type="ChEBI" id="CHEBI:29105"/>
    </ligand>
</feature>
<feature type="binding site" evidence="1">
    <location>
        <position position="237"/>
    </location>
    <ligand>
        <name>Zn(2+)</name>
        <dbReference type="ChEBI" id="CHEBI:29105"/>
    </ligand>
</feature>
<feature type="binding site" evidence="1">
    <location>
        <position position="241"/>
    </location>
    <ligand>
        <name>Zn(2+)</name>
        <dbReference type="ChEBI" id="CHEBI:29105"/>
    </ligand>
</feature>
<reference key="1">
    <citation type="journal article" date="2006" name="Nat. Biotechnol.">
        <title>Genome sequence of the ubiquitous hydrocarbon-degrading marine bacterium Alcanivorax borkumensis.</title>
        <authorList>
            <person name="Schneiker S."/>
            <person name="Martins dos Santos V.A.P."/>
            <person name="Bartels D."/>
            <person name="Bekel T."/>
            <person name="Brecht M."/>
            <person name="Buhrmester J."/>
            <person name="Chernikova T.N."/>
            <person name="Denaro R."/>
            <person name="Ferrer M."/>
            <person name="Gertler C."/>
            <person name="Goesmann A."/>
            <person name="Golyshina O.V."/>
            <person name="Kaminski F."/>
            <person name="Khachane A.N."/>
            <person name="Lang S."/>
            <person name="Linke B."/>
            <person name="McHardy A.C."/>
            <person name="Meyer F."/>
            <person name="Nechitaylo T."/>
            <person name="Puehler A."/>
            <person name="Regenhardt D."/>
            <person name="Rupp O."/>
            <person name="Sabirova J.S."/>
            <person name="Selbitschka W."/>
            <person name="Yakimov M.M."/>
            <person name="Timmis K.N."/>
            <person name="Vorhoelter F.-J."/>
            <person name="Weidner S."/>
            <person name="Kaiser O."/>
            <person name="Golyshin P.N."/>
        </authorList>
    </citation>
    <scope>NUCLEOTIDE SEQUENCE [LARGE SCALE GENOMIC DNA]</scope>
    <source>
        <strain>ATCC 700651 / DSM 11573 / NCIMB 13689 / SK2</strain>
    </source>
</reference>
<dbReference type="EC" id="3.5.1.108" evidence="1"/>
<dbReference type="EMBL" id="AM286690">
    <property type="protein sequence ID" value="CAL16052.1"/>
    <property type="molecule type" value="Genomic_DNA"/>
</dbReference>
<dbReference type="RefSeq" id="WP_011587889.1">
    <property type="nucleotide sequence ID" value="NC_008260.1"/>
</dbReference>
<dbReference type="SMR" id="Q0VRZ6"/>
<dbReference type="STRING" id="393595.ABO_0604"/>
<dbReference type="KEGG" id="abo:ABO_0604"/>
<dbReference type="eggNOG" id="COG0774">
    <property type="taxonomic scope" value="Bacteria"/>
</dbReference>
<dbReference type="HOGENOM" id="CLU_046528_1_0_6"/>
<dbReference type="OrthoDB" id="9802746at2"/>
<dbReference type="UniPathway" id="UPA00359">
    <property type="reaction ID" value="UER00478"/>
</dbReference>
<dbReference type="Proteomes" id="UP000008871">
    <property type="component" value="Chromosome"/>
</dbReference>
<dbReference type="GO" id="GO:0016020">
    <property type="term" value="C:membrane"/>
    <property type="evidence" value="ECO:0007669"/>
    <property type="project" value="GOC"/>
</dbReference>
<dbReference type="GO" id="GO:0046872">
    <property type="term" value="F:metal ion binding"/>
    <property type="evidence" value="ECO:0007669"/>
    <property type="project" value="UniProtKB-KW"/>
</dbReference>
<dbReference type="GO" id="GO:0103117">
    <property type="term" value="F:UDP-3-O-acyl-N-acetylglucosamine deacetylase activity"/>
    <property type="evidence" value="ECO:0007669"/>
    <property type="project" value="UniProtKB-UniRule"/>
</dbReference>
<dbReference type="GO" id="GO:0009245">
    <property type="term" value="P:lipid A biosynthetic process"/>
    <property type="evidence" value="ECO:0007669"/>
    <property type="project" value="UniProtKB-UniRule"/>
</dbReference>
<dbReference type="Gene3D" id="3.30.230.20">
    <property type="entry name" value="lpxc deacetylase, domain 1"/>
    <property type="match status" value="1"/>
</dbReference>
<dbReference type="Gene3D" id="3.30.1700.10">
    <property type="entry name" value="lpxc deacetylase, domain 2"/>
    <property type="match status" value="1"/>
</dbReference>
<dbReference type="HAMAP" id="MF_00388">
    <property type="entry name" value="LpxC"/>
    <property type="match status" value="1"/>
</dbReference>
<dbReference type="InterPro" id="IPR020568">
    <property type="entry name" value="Ribosomal_Su5_D2-typ_SF"/>
</dbReference>
<dbReference type="InterPro" id="IPR004463">
    <property type="entry name" value="UDP-acyl_GlcNac_deAcase"/>
</dbReference>
<dbReference type="InterPro" id="IPR011334">
    <property type="entry name" value="UDP-acyl_GlcNac_deAcase_C"/>
</dbReference>
<dbReference type="InterPro" id="IPR015870">
    <property type="entry name" value="UDP-acyl_N-AcGlcN_deAcase_N"/>
</dbReference>
<dbReference type="NCBIfam" id="TIGR00325">
    <property type="entry name" value="lpxC"/>
    <property type="match status" value="1"/>
</dbReference>
<dbReference type="PANTHER" id="PTHR33694">
    <property type="entry name" value="UDP-3-O-ACYL-N-ACETYLGLUCOSAMINE DEACETYLASE 1, MITOCHONDRIAL-RELATED"/>
    <property type="match status" value="1"/>
</dbReference>
<dbReference type="PANTHER" id="PTHR33694:SF1">
    <property type="entry name" value="UDP-3-O-ACYL-N-ACETYLGLUCOSAMINE DEACETYLASE 1, MITOCHONDRIAL-RELATED"/>
    <property type="match status" value="1"/>
</dbReference>
<dbReference type="Pfam" id="PF03331">
    <property type="entry name" value="LpxC"/>
    <property type="match status" value="1"/>
</dbReference>
<dbReference type="SUPFAM" id="SSF54211">
    <property type="entry name" value="Ribosomal protein S5 domain 2-like"/>
    <property type="match status" value="2"/>
</dbReference>
<evidence type="ECO:0000255" key="1">
    <source>
        <dbReference type="HAMAP-Rule" id="MF_00388"/>
    </source>
</evidence>
<organism>
    <name type="scientific">Alcanivorax borkumensis (strain ATCC 700651 / DSM 11573 / NCIMB 13689 / SK2)</name>
    <dbReference type="NCBI Taxonomy" id="393595"/>
    <lineage>
        <taxon>Bacteria</taxon>
        <taxon>Pseudomonadati</taxon>
        <taxon>Pseudomonadota</taxon>
        <taxon>Gammaproteobacteria</taxon>
        <taxon>Oceanospirillales</taxon>
        <taxon>Alcanivoracaceae</taxon>
        <taxon>Alcanivorax</taxon>
    </lineage>
</organism>
<name>LPXC_ALCBS</name>
<proteinExistence type="inferred from homology"/>
<keyword id="KW-0378">Hydrolase</keyword>
<keyword id="KW-0441">Lipid A biosynthesis</keyword>
<keyword id="KW-0444">Lipid biosynthesis</keyword>
<keyword id="KW-0443">Lipid metabolism</keyword>
<keyword id="KW-0479">Metal-binding</keyword>
<keyword id="KW-1185">Reference proteome</keyword>
<keyword id="KW-0862">Zinc</keyword>